<organism>
    <name type="scientific">Mycobacterium tuberculosis (strain CDC 1551 / Oshkosh)</name>
    <dbReference type="NCBI Taxonomy" id="83331"/>
    <lineage>
        <taxon>Bacteria</taxon>
        <taxon>Bacillati</taxon>
        <taxon>Actinomycetota</taxon>
        <taxon>Actinomycetes</taxon>
        <taxon>Mycobacteriales</taxon>
        <taxon>Mycobacteriaceae</taxon>
        <taxon>Mycobacterium</taxon>
        <taxon>Mycobacterium tuberculosis complex</taxon>
    </lineage>
</organism>
<evidence type="ECO:0000255" key="1"/>
<evidence type="ECO:0000256" key="2">
    <source>
        <dbReference type="SAM" id="MobiDB-lite"/>
    </source>
</evidence>
<evidence type="ECO:0000305" key="3"/>
<name>Y2197_MYCTO</name>
<reference key="1">
    <citation type="journal article" date="2002" name="J. Bacteriol.">
        <title>Whole-genome comparison of Mycobacterium tuberculosis clinical and laboratory strains.</title>
        <authorList>
            <person name="Fleischmann R.D."/>
            <person name="Alland D."/>
            <person name="Eisen J.A."/>
            <person name="Carpenter L."/>
            <person name="White O."/>
            <person name="Peterson J.D."/>
            <person name="DeBoy R.T."/>
            <person name="Dodson R.J."/>
            <person name="Gwinn M.L."/>
            <person name="Haft D.H."/>
            <person name="Hickey E.K."/>
            <person name="Kolonay J.F."/>
            <person name="Nelson W.C."/>
            <person name="Umayam L.A."/>
            <person name="Ermolaeva M.D."/>
            <person name="Salzberg S.L."/>
            <person name="Delcher A."/>
            <person name="Utterback T.R."/>
            <person name="Weidman J.F."/>
            <person name="Khouri H.M."/>
            <person name="Gill J."/>
            <person name="Mikula A."/>
            <person name="Bishai W."/>
            <person name="Jacobs W.R. Jr."/>
            <person name="Venter J.C."/>
            <person name="Fraser C.M."/>
        </authorList>
    </citation>
    <scope>NUCLEOTIDE SEQUENCE [LARGE SCALE GENOMIC DNA]</scope>
    <source>
        <strain>CDC 1551 / Oshkosh</strain>
    </source>
</reference>
<feature type="chain" id="PRO_0000427471" description="Uncharacterized protein MT2253">
    <location>
        <begin position="1"/>
        <end position="214"/>
    </location>
</feature>
<feature type="transmembrane region" description="Helical" evidence="1">
    <location>
        <begin position="23"/>
        <end position="43"/>
    </location>
</feature>
<feature type="transmembrane region" description="Helical" evidence="1">
    <location>
        <begin position="65"/>
        <end position="85"/>
    </location>
</feature>
<feature type="transmembrane region" description="Helical" evidence="1">
    <location>
        <begin position="152"/>
        <end position="172"/>
    </location>
</feature>
<feature type="transmembrane region" description="Helical" evidence="1">
    <location>
        <begin position="181"/>
        <end position="201"/>
    </location>
</feature>
<feature type="region of interest" description="Disordered" evidence="2">
    <location>
        <begin position="96"/>
        <end position="115"/>
    </location>
</feature>
<keyword id="KW-1003">Cell membrane</keyword>
<keyword id="KW-0472">Membrane</keyword>
<keyword id="KW-1185">Reference proteome</keyword>
<keyword id="KW-0812">Transmembrane</keyword>
<keyword id="KW-1133">Transmembrane helix</keyword>
<proteinExistence type="predicted"/>
<accession>P9WLI8</accession>
<accession>L0T8W8</accession>
<accession>Q10389</accession>
<comment type="subcellular location">
    <subcellularLocation>
        <location evidence="3">Cell membrane</location>
        <topology evidence="3">Multi-pass membrane protein</topology>
    </subcellularLocation>
</comment>
<sequence>MVSRYSAYRRGPDVISPDVIDRILVGACAAVWLVFTGVSVAAAVALMDLGRGFHEMAGNPHTTWVLYAVIVVSALVIVGAIPVLLRARRMAEAEPATRPTGASVRGGRSIGSGHPAKRAVAESAPVQHADAFEVAAEWSSEAVDRIWLRGTVVLTSAIGIALIAVAAATYLMAVGHDGPSWISYGLAGVVTAGMPVIEWLYARQLRRVVAPQSS</sequence>
<dbReference type="EMBL" id="AE000516">
    <property type="protein sequence ID" value="AAK46539.1"/>
    <property type="molecule type" value="Genomic_DNA"/>
</dbReference>
<dbReference type="PIR" id="F70784">
    <property type="entry name" value="F70784"/>
</dbReference>
<dbReference type="RefSeq" id="WP_003899213.1">
    <property type="nucleotide sequence ID" value="NZ_KK341227.1"/>
</dbReference>
<dbReference type="KEGG" id="mtc:MT2253"/>
<dbReference type="PATRIC" id="fig|83331.31.peg.2428"/>
<dbReference type="HOGENOM" id="CLU_112435_0_0_11"/>
<dbReference type="Proteomes" id="UP000001020">
    <property type="component" value="Chromosome"/>
</dbReference>
<dbReference type="GO" id="GO:0005886">
    <property type="term" value="C:plasma membrane"/>
    <property type="evidence" value="ECO:0007669"/>
    <property type="project" value="UniProtKB-SubCell"/>
</dbReference>
<dbReference type="InterPro" id="IPR024381">
    <property type="entry name" value="DUF2561"/>
</dbReference>
<dbReference type="Pfam" id="PF10812">
    <property type="entry name" value="DUF2561"/>
    <property type="match status" value="1"/>
</dbReference>
<gene>
    <name type="ordered locus">MT2253</name>
</gene>
<protein>
    <recommendedName>
        <fullName>Uncharacterized protein MT2253</fullName>
    </recommendedName>
</protein>